<proteinExistence type="evidence at protein level"/>
<gene>
    <name evidence="4" type="primary">arcD2</name>
    <name evidence="7" type="ordered locus">llmg_2307</name>
</gene>
<organism>
    <name type="scientific">Lactococcus lactis subsp. cremoris (strain MG1363)</name>
    <dbReference type="NCBI Taxonomy" id="416870"/>
    <lineage>
        <taxon>Bacteria</taxon>
        <taxon>Bacillati</taxon>
        <taxon>Bacillota</taxon>
        <taxon>Bacilli</taxon>
        <taxon>Lactobacillales</taxon>
        <taxon>Streptococcaceae</taxon>
        <taxon>Lactococcus</taxon>
        <taxon>Lactococcus cremoris subsp. cremoris</taxon>
    </lineage>
</organism>
<reference key="1">
    <citation type="journal article" date="2007" name="J. Bacteriol.">
        <title>The complete genome sequence of the lactic acid bacterial paradigm Lactococcus lactis subsp. cremoris MG1363.</title>
        <authorList>
            <person name="Wegmann U."/>
            <person name="O'Connell-Motherway M."/>
            <person name="Zomer A."/>
            <person name="Buist G."/>
            <person name="Shearman C."/>
            <person name="Canchaya C."/>
            <person name="Ventura M."/>
            <person name="Goesmann A."/>
            <person name="Gasson M.J."/>
            <person name="Kuipers O.P."/>
            <person name="van Sinderen D."/>
            <person name="Kok J."/>
        </authorList>
    </citation>
    <scope>NUCLEOTIDE SEQUENCE [LARGE SCALE GENOMIC DNA]</scope>
    <source>
        <strain>MG1363</strain>
    </source>
</reference>
<reference key="2">
    <citation type="journal article" date="2013" name="J. Bacteriol.">
        <title>Cloning, expression, and functional characterization of secondary amino acid transporters of Lactococcus lactis.</title>
        <authorList>
            <person name="Trip H."/>
            <person name="Mulder N.L."/>
            <person name="Lolkema J.S."/>
        </authorList>
    </citation>
    <scope>FUNCTION</scope>
    <source>
        <strain>MG1363</strain>
    </source>
</reference>
<reference key="3">
    <citation type="journal article" date="2015" name="J. Bacteriol.">
        <title>ArcD1 and ArcD2 arginine/ornithine exchangers encoded in the arginine deiminase pathway gene cluster of Lactococcus lactis.</title>
        <authorList>
            <person name="Noens E.E."/>
            <person name="Kaczmarek M.B."/>
            <person name="Zygo M."/>
            <person name="Lolkema J.S."/>
        </authorList>
    </citation>
    <scope>FUNCTION</scope>
    <scope>CATALYTIC ACTIVITY</scope>
    <scope>BIOPHYSICOCHEMICAL PROPERTIES</scope>
    <scope>DISRUPTION PHENOTYPE</scope>
    <source>
        <strain>MG1363</strain>
    </source>
</reference>
<keyword id="KW-0029">Amino-acid transport</keyword>
<keyword id="KW-0050">Antiport</keyword>
<keyword id="KW-1003">Cell membrane</keyword>
<keyword id="KW-0472">Membrane</keyword>
<keyword id="KW-0812">Transmembrane</keyword>
<keyword id="KW-1133">Transmembrane helix</keyword>
<keyword id="KW-0813">Transport</keyword>
<name>ARCD2_LACLM</name>
<dbReference type="EMBL" id="AM406671">
    <property type="protein sequence ID" value="CAL98871.1"/>
    <property type="molecule type" value="Genomic_DNA"/>
</dbReference>
<dbReference type="RefSeq" id="WP_011835980.1">
    <property type="nucleotide sequence ID" value="NC_009004.1"/>
</dbReference>
<dbReference type="SMR" id="A2RNI1"/>
<dbReference type="STRING" id="416870.llmg_2307"/>
<dbReference type="KEGG" id="llm:llmg_2307"/>
<dbReference type="eggNOG" id="COG0531">
    <property type="taxonomic scope" value="Bacteria"/>
</dbReference>
<dbReference type="HOGENOM" id="CLU_007946_1_2_9"/>
<dbReference type="OrthoDB" id="9762947at2"/>
<dbReference type="PhylomeDB" id="A2RNI1"/>
<dbReference type="SABIO-RK" id="A2RNI1"/>
<dbReference type="Proteomes" id="UP000000364">
    <property type="component" value="Chromosome"/>
</dbReference>
<dbReference type="GO" id="GO:0005886">
    <property type="term" value="C:plasma membrane"/>
    <property type="evidence" value="ECO:0007669"/>
    <property type="project" value="UniProtKB-SubCell"/>
</dbReference>
<dbReference type="GO" id="GO:0015297">
    <property type="term" value="F:antiporter activity"/>
    <property type="evidence" value="ECO:0007669"/>
    <property type="project" value="UniProtKB-KW"/>
</dbReference>
<dbReference type="GO" id="GO:0006865">
    <property type="term" value="P:amino acid transport"/>
    <property type="evidence" value="ECO:0007669"/>
    <property type="project" value="UniProtKB-KW"/>
</dbReference>
<dbReference type="Gene3D" id="1.20.1740.10">
    <property type="entry name" value="Amino acid/polyamine transporter I"/>
    <property type="match status" value="1"/>
</dbReference>
<dbReference type="InterPro" id="IPR002293">
    <property type="entry name" value="AA/rel_permease1"/>
</dbReference>
<dbReference type="InterPro" id="IPR004754">
    <property type="entry name" value="Amino_acid_antiprt"/>
</dbReference>
<dbReference type="InterPro" id="IPR050367">
    <property type="entry name" value="APC_superfamily"/>
</dbReference>
<dbReference type="NCBIfam" id="TIGR00905">
    <property type="entry name" value="2A0302"/>
    <property type="match status" value="1"/>
</dbReference>
<dbReference type="PANTHER" id="PTHR42770">
    <property type="entry name" value="AMINO ACID TRANSPORTER-RELATED"/>
    <property type="match status" value="1"/>
</dbReference>
<dbReference type="PANTHER" id="PTHR42770:SF4">
    <property type="entry name" value="ARGININE_ORNITHINE ANTIPORTER-RELATED"/>
    <property type="match status" value="1"/>
</dbReference>
<dbReference type="Pfam" id="PF13520">
    <property type="entry name" value="AA_permease_2"/>
    <property type="match status" value="1"/>
</dbReference>
<dbReference type="PIRSF" id="PIRSF006060">
    <property type="entry name" value="AA_transporter"/>
    <property type="match status" value="1"/>
</dbReference>
<evidence type="ECO:0000255" key="1"/>
<evidence type="ECO:0000269" key="2">
    <source>
    </source>
</evidence>
<evidence type="ECO:0000269" key="3">
    <source>
    </source>
</evidence>
<evidence type="ECO:0000303" key="4">
    <source>
    </source>
</evidence>
<evidence type="ECO:0000303" key="5">
    <source>
    </source>
</evidence>
<evidence type="ECO:0000305" key="6"/>
<evidence type="ECO:0000312" key="7">
    <source>
        <dbReference type="EMBL" id="CAL98871.1"/>
    </source>
</evidence>
<comment type="function">
    <text evidence="2 3">Catalyzes electroneutral exchange between L-arginine and L-ornithine (PubMed:23144255). Can also efficiently translocate L-alanine (PubMed:26324452). May function in vivo as a L-arginine/L-alanine exchanger in a pathway together with the arcT gene, which is found adjacent to the arcD2 gene in the ADI gene cluster (PubMed:26324452).</text>
</comment>
<comment type="catalytic activity">
    <reaction evidence="3">
        <text>L-ornithine(in) + L-arginine(out) = L-ornithine(out) + L-arginine(in)</text>
        <dbReference type="Rhea" id="RHEA:34991"/>
        <dbReference type="ChEBI" id="CHEBI:32682"/>
        <dbReference type="ChEBI" id="CHEBI:46911"/>
    </reaction>
</comment>
<comment type="biophysicochemical properties">
    <kinetics>
        <KM evidence="3">4 uM for L-arginine</KM>
        <KM evidence="3">29 uM for L-ornithine</KM>
        <Vmax evidence="3">22.0 nmol/min/mg enzyme toward L-arginine</Vmax>
        <Vmax evidence="3">128.0 nmol/min/mg enzyme toward L-ornithine</Vmax>
    </kinetics>
</comment>
<comment type="subcellular location">
    <subcellularLocation>
        <location evidence="6">Cell membrane</location>
        <topology evidence="1">Multi-pass membrane protein</topology>
    </subcellularLocation>
</comment>
<comment type="disruption phenotype">
    <text evidence="3">Deletion does not affect the growth enhancement observed in the presence of high L-arginine in different growth media, and uptake activities are slightly reduced.</text>
</comment>
<comment type="similarity">
    <text evidence="6">Belongs to the amino acid-polyamine-organocation (APC) superfamily. Basic amino acid/polyamine antiporter (APA) (TC 2.A.3.2) family.</text>
</comment>
<sequence>MENKKTKGISLFALLAIIISGAIGGGVFNLANDLARGSTPGGVVISWLFIGFGILMLVLSFNRLITIKPDLSGVSDYARAGFGDFVGFLSGWGYWISAWTGTIGFAVLMMTSADYFFPSKFANSNGSLTILSVIIVSIISWILMLLVDRGVETAAAVNAIVMIAKLIPLVVFSITGIILFKANVFTQHFWQTFTTNFAADGSVKDFVWHAMTVSGLLSQIKGSLMVMVWVFVGIEGATMMGNRAKKKSDTAKATVIGLAVLLVIYVLLSLLPYGYMDQASLANVKAPGLVYILNEMVGGWGGSLMAVGLMISLLGAWLSWTMLPVEATQQLAEQKLLPSWFGKLNKYHAPSNSLLITQLMIQIFIIITYFVANAYNVFIYMATAVIMICYALVGAYLFKIGLKEASVKNILIGFFTFAFQALALYLSGWQYVWLAMILYTIGFLLFIGAKKESHQSISVKEWLGMLVVTVLGVLAIVVLICGAKAGTAFDLRGLLGF</sequence>
<accession>A2RNI1</accession>
<feature type="chain" id="PRO_0000437970" description="Arginine/ornithine antiporter ArcD2">
    <location>
        <begin position="1"/>
        <end position="497"/>
    </location>
</feature>
<feature type="transmembrane region" description="Helical" evidence="1">
    <location>
        <begin position="8"/>
        <end position="28"/>
    </location>
</feature>
<feature type="transmembrane region" description="Helical" evidence="1">
    <location>
        <begin position="41"/>
        <end position="61"/>
    </location>
</feature>
<feature type="transmembrane region" description="Helical" evidence="1">
    <location>
        <begin position="88"/>
        <end position="108"/>
    </location>
</feature>
<feature type="transmembrane region" description="Helical" evidence="1">
    <location>
        <begin position="127"/>
        <end position="147"/>
    </location>
</feature>
<feature type="transmembrane region" description="Helical" evidence="1">
    <location>
        <begin position="160"/>
        <end position="180"/>
    </location>
</feature>
<feature type="transmembrane region" description="Helical" evidence="1">
    <location>
        <begin position="220"/>
        <end position="240"/>
    </location>
</feature>
<feature type="transmembrane region" description="Helical" evidence="1">
    <location>
        <begin position="255"/>
        <end position="275"/>
    </location>
</feature>
<feature type="transmembrane region" description="Helical" evidence="1">
    <location>
        <begin position="297"/>
        <end position="317"/>
    </location>
</feature>
<feature type="transmembrane region" description="Helical" evidence="1">
    <location>
        <begin position="354"/>
        <end position="374"/>
    </location>
</feature>
<feature type="transmembrane region" description="Helical" evidence="1">
    <location>
        <begin position="378"/>
        <end position="398"/>
    </location>
</feature>
<feature type="transmembrane region" description="Helical" evidence="1">
    <location>
        <begin position="406"/>
        <end position="426"/>
    </location>
</feature>
<feature type="transmembrane region" description="Helical" evidence="1">
    <location>
        <begin position="429"/>
        <end position="449"/>
    </location>
</feature>
<feature type="transmembrane region" description="Helical" evidence="1">
    <location>
        <begin position="462"/>
        <end position="482"/>
    </location>
</feature>
<protein>
    <recommendedName>
        <fullName evidence="6">Arginine/ornithine antiporter ArcD2</fullName>
    </recommendedName>
    <alternativeName>
        <fullName evidence="5">Arginine/ornithine exchanger</fullName>
    </alternativeName>
</protein>